<evidence type="ECO:0000255" key="1">
    <source>
        <dbReference type="PROSITE-ProRule" id="PRU00285"/>
    </source>
</evidence>
<evidence type="ECO:0000256" key="2">
    <source>
        <dbReference type="SAM" id="MobiDB-lite"/>
    </source>
</evidence>
<keyword id="KW-1185">Reference proteome</keyword>
<keyword id="KW-0677">Repeat</keyword>
<organism>
    <name type="scientific">Schistosoma mansoni</name>
    <name type="common">Blood fluke</name>
    <dbReference type="NCBI Taxonomy" id="6183"/>
    <lineage>
        <taxon>Eukaryota</taxon>
        <taxon>Metazoa</taxon>
        <taxon>Spiralia</taxon>
        <taxon>Lophotrochozoa</taxon>
        <taxon>Platyhelminthes</taxon>
        <taxon>Trematoda</taxon>
        <taxon>Digenea</taxon>
        <taxon>Strigeidida</taxon>
        <taxon>Schistosomatoidea</taxon>
        <taxon>Schistosomatidae</taxon>
        <taxon>Schistosoma</taxon>
    </lineage>
</organism>
<dbReference type="EMBL" id="M15508">
    <property type="protein sequence ID" value="AAA29902.1"/>
    <property type="molecule type" value="mRNA"/>
</dbReference>
<dbReference type="EMBL" id="M15509">
    <property type="protein sequence ID" value="AAA29903.1"/>
    <property type="molecule type" value="mRNA"/>
</dbReference>
<dbReference type="EMBL" id="M15510">
    <property type="protein sequence ID" value="AAA29904.1"/>
    <property type="molecule type" value="mRNA"/>
</dbReference>
<dbReference type="PIR" id="A54521">
    <property type="entry name" value="A54521"/>
</dbReference>
<dbReference type="SMR" id="P12812"/>
<dbReference type="STRING" id="6183.P12812"/>
<dbReference type="eggNOG" id="KOG3591">
    <property type="taxonomic scope" value="Eukaryota"/>
</dbReference>
<dbReference type="HOGENOM" id="CLU_046766_0_0_1"/>
<dbReference type="InParanoid" id="P12812"/>
<dbReference type="Proteomes" id="UP000008854">
    <property type="component" value="Unassembled WGS sequence"/>
</dbReference>
<dbReference type="GO" id="GO:0005737">
    <property type="term" value="C:cytoplasm"/>
    <property type="evidence" value="ECO:0007669"/>
    <property type="project" value="TreeGrafter"/>
</dbReference>
<dbReference type="GO" id="GO:0005634">
    <property type="term" value="C:nucleus"/>
    <property type="evidence" value="ECO:0007669"/>
    <property type="project" value="TreeGrafter"/>
</dbReference>
<dbReference type="GO" id="GO:0051082">
    <property type="term" value="F:unfolded protein binding"/>
    <property type="evidence" value="ECO:0007669"/>
    <property type="project" value="TreeGrafter"/>
</dbReference>
<dbReference type="GO" id="GO:0042026">
    <property type="term" value="P:protein refolding"/>
    <property type="evidence" value="ECO:0007669"/>
    <property type="project" value="TreeGrafter"/>
</dbReference>
<dbReference type="GO" id="GO:0009408">
    <property type="term" value="P:response to heat"/>
    <property type="evidence" value="ECO:0007669"/>
    <property type="project" value="TreeGrafter"/>
</dbReference>
<dbReference type="CDD" id="cd06526">
    <property type="entry name" value="metazoan_ACD"/>
    <property type="match status" value="2"/>
</dbReference>
<dbReference type="Gene3D" id="2.60.40.790">
    <property type="match status" value="2"/>
</dbReference>
<dbReference type="InterPro" id="IPR002068">
    <property type="entry name" value="A-crystallin/Hsp20_dom"/>
</dbReference>
<dbReference type="InterPro" id="IPR001436">
    <property type="entry name" value="Alpha-crystallin/sHSP_animal"/>
</dbReference>
<dbReference type="InterPro" id="IPR008978">
    <property type="entry name" value="HSP20-like_chaperone"/>
</dbReference>
<dbReference type="PANTHER" id="PTHR45640">
    <property type="entry name" value="HEAT SHOCK PROTEIN HSP-12.2-RELATED"/>
    <property type="match status" value="1"/>
</dbReference>
<dbReference type="PANTHER" id="PTHR45640:SF26">
    <property type="entry name" value="RE23625P"/>
    <property type="match status" value="1"/>
</dbReference>
<dbReference type="Pfam" id="PF00011">
    <property type="entry name" value="HSP20"/>
    <property type="match status" value="2"/>
</dbReference>
<dbReference type="PRINTS" id="PR00299">
    <property type="entry name" value="ACRYSTALLIN"/>
</dbReference>
<dbReference type="SUPFAM" id="SSF49764">
    <property type="entry name" value="HSP20-like chaperones"/>
    <property type="match status" value="2"/>
</dbReference>
<dbReference type="PROSITE" id="PS01031">
    <property type="entry name" value="SHSP"/>
    <property type="match status" value="2"/>
</dbReference>
<accession>P12812</accession>
<name>P40_SCHMA</name>
<protein>
    <recommendedName>
        <fullName>Major egg antigen</fullName>
    </recommendedName>
    <alternativeName>
        <fullName>p40</fullName>
    </alternativeName>
</protein>
<reference key="1">
    <citation type="journal article" date="1986" name="Mol. Biochem. Parasitol.">
        <title>Sequence and expression of a major egg antigen from Schistosoma mansoni. Homologies to heat shock proteins and alpha-crystallins.</title>
        <authorList>
            <person name="Nene V."/>
            <person name="Dunne D.W."/>
            <person name="Johnson K.S."/>
            <person name="Taylor D.W."/>
            <person name="Cordingley J.S."/>
        </authorList>
    </citation>
    <scope>NUCLEOTIDE SEQUENCE [MRNA]</scope>
    <source>
        <strain>Puerto Rican</strain>
    </source>
</reference>
<feature type="chain" id="PRO_0000126062" description="Major egg antigen">
    <location>
        <begin position="1"/>
        <end position="354"/>
    </location>
</feature>
<feature type="domain" description="sHSP 1" evidence="1">
    <location>
        <begin position="122"/>
        <end position="233"/>
    </location>
</feature>
<feature type="domain" description="sHSP 2" evidence="1">
    <location>
        <begin position="251"/>
        <end position="354"/>
    </location>
</feature>
<feature type="region of interest" description="Disordered" evidence="2">
    <location>
        <begin position="1"/>
        <end position="21"/>
    </location>
</feature>
<feature type="sequence variant">
    <original>M</original>
    <variation>I</variation>
    <location>
        <position position="98"/>
    </location>
</feature>
<comment type="similarity">
    <text evidence="1">Belongs to the small heat shock protein (HSP20) family.</text>
</comment>
<sequence length="354" mass="39428">MSGGKQHNAVSIPVNREQRSFEKQRRDLLTGLEHGGGAHRGNSIAPYTEDWPSTVDNWIDSSWKRWDDDMRRLRRGMFALLPLDTFSIGILENPFALMHQMDRQIQDIRERMGSLDVPSTGSVNDFLKDAYEVGEDGKVHFKVRFDAQGFAPQDINVTSSENRVTVHAKKETTTDGRKCSREFCRMVQLPKSIDDSQLKCRMTDDGVLMLEAPVKVDQNQSLTLNESGQVAVRPKSDNQIKAVPASQALVAKGVHGLSYVDDGSGGKRLHVEVAVDPVYKPEDLFVNVDSNRVVVSGRHHKQKSDQHGRSSSFAEFSQSYAIPETVDPLSVSAQVVGNTLVLEAPLEKQHAITH</sequence>
<proteinExistence type="evidence at transcript level"/>